<evidence type="ECO:0000255" key="1">
    <source>
        <dbReference type="HAMAP-Rule" id="MF_01594"/>
    </source>
</evidence>
<protein>
    <recommendedName>
        <fullName evidence="1">Rhomboid protease GlpG</fullName>
        <ecNumber evidence="1">3.4.21.105</ecNumber>
    </recommendedName>
    <alternativeName>
        <fullName evidence="1">Intramembrane serine protease</fullName>
    </alternativeName>
</protein>
<feature type="chain" id="PRO_0000321697" description="Rhomboid protease GlpG">
    <location>
        <begin position="1"/>
        <end position="276"/>
    </location>
</feature>
<feature type="transmembrane region" description="Helical" evidence="1">
    <location>
        <begin position="94"/>
        <end position="114"/>
    </location>
</feature>
<feature type="transmembrane region" description="Helical" evidence="1">
    <location>
        <begin position="142"/>
        <end position="162"/>
    </location>
</feature>
<feature type="transmembrane region" description="Helical" evidence="1">
    <location>
        <begin position="169"/>
        <end position="189"/>
    </location>
</feature>
<feature type="transmembrane region" description="Helical" evidence="1">
    <location>
        <begin position="192"/>
        <end position="212"/>
    </location>
</feature>
<feature type="transmembrane region" description="Helical" evidence="1">
    <location>
        <begin position="229"/>
        <end position="249"/>
    </location>
</feature>
<feature type="transmembrane region" description="Helical" evidence="1">
    <location>
        <begin position="250"/>
        <end position="270"/>
    </location>
</feature>
<feature type="active site" description="Nucleophile" evidence="1">
    <location>
        <position position="201"/>
    </location>
</feature>
<feature type="active site" evidence="1">
    <location>
        <position position="254"/>
    </location>
</feature>
<proteinExistence type="inferred from homology"/>
<dbReference type="EC" id="3.4.21.105" evidence="1"/>
<dbReference type="EMBL" id="CP000038">
    <property type="protein sequence ID" value="AAZ90208.1"/>
    <property type="molecule type" value="Genomic_DNA"/>
</dbReference>
<dbReference type="RefSeq" id="WP_000928722.1">
    <property type="nucleotide sequence ID" value="NC_007384.1"/>
</dbReference>
<dbReference type="SMR" id="Q3YWA4"/>
<dbReference type="MEROPS" id="S54.016"/>
<dbReference type="GeneID" id="93778572"/>
<dbReference type="KEGG" id="ssn:SSON_3661"/>
<dbReference type="HOGENOM" id="CLU_058989_0_0_6"/>
<dbReference type="Proteomes" id="UP000002529">
    <property type="component" value="Chromosome"/>
</dbReference>
<dbReference type="GO" id="GO:0005886">
    <property type="term" value="C:plasma membrane"/>
    <property type="evidence" value="ECO:0007669"/>
    <property type="project" value="UniProtKB-SubCell"/>
</dbReference>
<dbReference type="GO" id="GO:0004252">
    <property type="term" value="F:serine-type endopeptidase activity"/>
    <property type="evidence" value="ECO:0007669"/>
    <property type="project" value="UniProtKB-UniRule"/>
</dbReference>
<dbReference type="GO" id="GO:0006508">
    <property type="term" value="P:proteolysis"/>
    <property type="evidence" value="ECO:0007669"/>
    <property type="project" value="UniProtKB-UniRule"/>
</dbReference>
<dbReference type="FunFam" id="1.20.1540.10:FF:000003">
    <property type="entry name" value="Rhomboid protease GlpG"/>
    <property type="match status" value="1"/>
</dbReference>
<dbReference type="FunFam" id="3.30.70.2350:FF:000001">
    <property type="entry name" value="Rhomboid protease GlpG"/>
    <property type="match status" value="1"/>
</dbReference>
<dbReference type="Gene3D" id="3.30.70.2350">
    <property type="match status" value="1"/>
</dbReference>
<dbReference type="Gene3D" id="1.20.1540.10">
    <property type="entry name" value="Rhomboid-like"/>
    <property type="match status" value="1"/>
</dbReference>
<dbReference type="HAMAP" id="MF_01594">
    <property type="entry name" value="Rhomboid_GlpG"/>
    <property type="match status" value="1"/>
</dbReference>
<dbReference type="InterPro" id="IPR038236">
    <property type="entry name" value="GlpG_N_sf"/>
</dbReference>
<dbReference type="InterPro" id="IPR022732">
    <property type="entry name" value="Peptidase_S54_GlpG_N"/>
</dbReference>
<dbReference type="InterPro" id="IPR022764">
    <property type="entry name" value="Peptidase_S54_rhomboid_dom"/>
</dbReference>
<dbReference type="InterPro" id="IPR035952">
    <property type="entry name" value="Rhomboid-like_sf"/>
</dbReference>
<dbReference type="InterPro" id="IPR023662">
    <property type="entry name" value="Rhomboid_protease_GlpG"/>
</dbReference>
<dbReference type="NCBIfam" id="NF008155">
    <property type="entry name" value="PRK10907.1"/>
    <property type="match status" value="1"/>
</dbReference>
<dbReference type="NCBIfam" id="TIGR04239">
    <property type="entry name" value="rhombo_GlpG"/>
    <property type="match status" value="1"/>
</dbReference>
<dbReference type="PANTHER" id="PTHR43066:SF26">
    <property type="entry name" value="RHOMBOID PROTEASE GLPG"/>
    <property type="match status" value="1"/>
</dbReference>
<dbReference type="PANTHER" id="PTHR43066">
    <property type="entry name" value="RHOMBOID-RELATED PROTEIN"/>
    <property type="match status" value="1"/>
</dbReference>
<dbReference type="Pfam" id="PF01694">
    <property type="entry name" value="Rhomboid"/>
    <property type="match status" value="1"/>
</dbReference>
<dbReference type="Pfam" id="PF12122">
    <property type="entry name" value="Rhomboid_N"/>
    <property type="match status" value="1"/>
</dbReference>
<dbReference type="SUPFAM" id="SSF144091">
    <property type="entry name" value="Rhomboid-like"/>
    <property type="match status" value="1"/>
</dbReference>
<accession>Q3YWA4</accession>
<reference key="1">
    <citation type="journal article" date="2005" name="Nucleic Acids Res.">
        <title>Genome dynamics and diversity of Shigella species, the etiologic agents of bacillary dysentery.</title>
        <authorList>
            <person name="Yang F."/>
            <person name="Yang J."/>
            <person name="Zhang X."/>
            <person name="Chen L."/>
            <person name="Jiang Y."/>
            <person name="Yan Y."/>
            <person name="Tang X."/>
            <person name="Wang J."/>
            <person name="Xiong Z."/>
            <person name="Dong J."/>
            <person name="Xue Y."/>
            <person name="Zhu Y."/>
            <person name="Xu X."/>
            <person name="Sun L."/>
            <person name="Chen S."/>
            <person name="Nie H."/>
            <person name="Peng J."/>
            <person name="Xu J."/>
            <person name="Wang Y."/>
            <person name="Yuan Z."/>
            <person name="Wen Y."/>
            <person name="Yao Z."/>
            <person name="Shen Y."/>
            <person name="Qiang B."/>
            <person name="Hou Y."/>
            <person name="Yu J."/>
            <person name="Jin Q."/>
        </authorList>
    </citation>
    <scope>NUCLEOTIDE SEQUENCE [LARGE SCALE GENOMIC DNA]</scope>
    <source>
        <strain>Ss046</strain>
    </source>
</reference>
<comment type="function">
    <text evidence="1">Rhomboid-type serine protease that catalyzes intramembrane proteolysis.</text>
</comment>
<comment type="catalytic activity">
    <reaction evidence="1">
        <text>Cleaves type-1 transmembrane domains using a catalytic dyad composed of serine and histidine that are contributed by different transmembrane domains.</text>
        <dbReference type="EC" id="3.4.21.105"/>
    </reaction>
</comment>
<comment type="subcellular location">
    <subcellularLocation>
        <location evidence="1">Cell inner membrane</location>
        <topology evidence="1">Multi-pass membrane protein</topology>
    </subcellularLocation>
</comment>
<comment type="similarity">
    <text evidence="1">Belongs to the peptidase S54 family.</text>
</comment>
<sequence length="276" mass="31277">MLMITSFANPRVAQAFVDYMATQGVILTIQQHNQSDVWLADESQAERVRAELARFLENPADPRYLAASWQAGHTGSGLHYRRYPFFAALRERAGPVTWVMMIACVVVFIAMQILGDQEVMLWLAWPFDPALKFEFWRYFTHALMHFSLMHILFNLLWWWYLGGAVEKRLGSGKLIVITLISALLSGYVQQKFSGPWFGGLSGVVYALMGYVWLRGERDPQSGIYLQRGLIIFALIWIVAGWFDLFGMSMANGAHIAGLAVGLAMAFVDSLNARKRK</sequence>
<gene>
    <name evidence="1" type="primary">glpG</name>
    <name type="ordered locus">SSON_3661</name>
</gene>
<keyword id="KW-0997">Cell inner membrane</keyword>
<keyword id="KW-1003">Cell membrane</keyword>
<keyword id="KW-0378">Hydrolase</keyword>
<keyword id="KW-0472">Membrane</keyword>
<keyword id="KW-0645">Protease</keyword>
<keyword id="KW-1185">Reference proteome</keyword>
<keyword id="KW-0720">Serine protease</keyword>
<keyword id="KW-0812">Transmembrane</keyword>
<keyword id="KW-1133">Transmembrane helix</keyword>
<name>GLPG_SHISS</name>
<organism>
    <name type="scientific">Shigella sonnei (strain Ss046)</name>
    <dbReference type="NCBI Taxonomy" id="300269"/>
    <lineage>
        <taxon>Bacteria</taxon>
        <taxon>Pseudomonadati</taxon>
        <taxon>Pseudomonadota</taxon>
        <taxon>Gammaproteobacteria</taxon>
        <taxon>Enterobacterales</taxon>
        <taxon>Enterobacteriaceae</taxon>
        <taxon>Shigella</taxon>
    </lineage>
</organism>